<reference key="1">
    <citation type="submission" date="2018-05" db="UniProtKB">
        <title>Purification and characterization of a MlPLA2 from Micrurus lemniscatus snake venom.</title>
        <authorList>
            <person name="Guimaraes L."/>
            <person name="Santos J."/>
            <person name="Gouveia V."/>
            <person name="Borges M."/>
        </authorList>
    </citation>
    <scope>PROTEIN SEQUENCE</scope>
    <scope>IDENTIFICATION BY MASS SPECTROMETRY</scope>
    <scope>MASS SPECTROMETRY</scope>
    <scope>SUBCELLULAR LOCATION</scope>
    <scope>TISSUE SPECIFICITY</scope>
    <source>
        <tissue evidence="4">Venom</tissue>
    </source>
</reference>
<keyword id="KW-0106">Calcium</keyword>
<keyword id="KW-0903">Direct protein sequencing</keyword>
<keyword id="KW-1015">Disulfide bond</keyword>
<keyword id="KW-0378">Hydrolase</keyword>
<keyword id="KW-0442">Lipid degradation</keyword>
<keyword id="KW-0443">Lipid metabolism</keyword>
<keyword id="KW-0479">Metal-binding</keyword>
<keyword id="KW-0964">Secreted</keyword>
<dbReference type="EC" id="3.1.1.4" evidence="2"/>
<dbReference type="SMR" id="C0HLB8"/>
<dbReference type="GO" id="GO:0005576">
    <property type="term" value="C:extracellular region"/>
    <property type="evidence" value="ECO:0007669"/>
    <property type="project" value="UniProtKB-SubCell"/>
</dbReference>
<dbReference type="GO" id="GO:0005509">
    <property type="term" value="F:calcium ion binding"/>
    <property type="evidence" value="ECO:0007669"/>
    <property type="project" value="InterPro"/>
</dbReference>
<dbReference type="GO" id="GO:0004623">
    <property type="term" value="F:phospholipase A2 activity"/>
    <property type="evidence" value="ECO:0007669"/>
    <property type="project" value="UniProtKB-EC"/>
</dbReference>
<dbReference type="GO" id="GO:0050482">
    <property type="term" value="P:arachidonate secretion"/>
    <property type="evidence" value="ECO:0007669"/>
    <property type="project" value="InterPro"/>
</dbReference>
<dbReference type="GO" id="GO:0016042">
    <property type="term" value="P:lipid catabolic process"/>
    <property type="evidence" value="ECO:0007669"/>
    <property type="project" value="UniProtKB-KW"/>
</dbReference>
<dbReference type="GO" id="GO:0006644">
    <property type="term" value="P:phospholipid metabolic process"/>
    <property type="evidence" value="ECO:0007669"/>
    <property type="project" value="InterPro"/>
</dbReference>
<dbReference type="Gene3D" id="1.20.90.10">
    <property type="entry name" value="Phospholipase A2 domain"/>
    <property type="match status" value="1"/>
</dbReference>
<dbReference type="InterPro" id="IPR001211">
    <property type="entry name" value="PLipase_A2"/>
</dbReference>
<dbReference type="InterPro" id="IPR016090">
    <property type="entry name" value="PLipase_A2_dom"/>
</dbReference>
<dbReference type="InterPro" id="IPR036444">
    <property type="entry name" value="PLipase_A2_dom_sf"/>
</dbReference>
<dbReference type="Pfam" id="PF00068">
    <property type="entry name" value="Phospholip_A2_1"/>
    <property type="match status" value="1"/>
</dbReference>
<dbReference type="PRINTS" id="PR00389">
    <property type="entry name" value="PHPHLIPASEA2"/>
</dbReference>
<dbReference type="SUPFAM" id="SSF48619">
    <property type="entry name" value="Phospholipase A2, PLA2"/>
    <property type="match status" value="1"/>
</dbReference>
<name>PA2_MICLE</name>
<comment type="function">
    <text evidence="2">PLA2 catalyzes the calcium-dependent hydrolysis of the 2-acyl groups in 3-sn-phosphoglycerides.</text>
</comment>
<comment type="catalytic activity">
    <reaction evidence="2">
        <text>a 1,2-diacyl-sn-glycero-3-phosphocholine + H2O = a 1-acyl-sn-glycero-3-phosphocholine + a fatty acid + H(+)</text>
        <dbReference type="Rhea" id="RHEA:15801"/>
        <dbReference type="ChEBI" id="CHEBI:15377"/>
        <dbReference type="ChEBI" id="CHEBI:15378"/>
        <dbReference type="ChEBI" id="CHEBI:28868"/>
        <dbReference type="ChEBI" id="CHEBI:57643"/>
        <dbReference type="ChEBI" id="CHEBI:58168"/>
        <dbReference type="EC" id="3.1.1.4"/>
    </reaction>
</comment>
<comment type="cofactor">
    <cofactor evidence="2">
        <name>Ca(2+)</name>
        <dbReference type="ChEBI" id="CHEBI:29108"/>
    </cofactor>
    <text evidence="2">Binds 1 Ca(2+) ion.</text>
</comment>
<comment type="subcellular location">
    <subcellularLocation>
        <location evidence="3">Secreted</location>
    </subcellularLocation>
</comment>
<comment type="tissue specificity">
    <text evidence="6">Expressed by the venom gland.</text>
</comment>
<comment type="mass spectrometry" mass="13811.0" method="MALDI" evidence="3"/>
<comment type="similarity">
    <text evidence="5">Belongs to the phospholipase A2 family. Group I subfamily.</text>
</comment>
<proteinExistence type="evidence at protein level"/>
<evidence type="ECO:0000250" key="1">
    <source>
        <dbReference type="UniProtKB" id="P15445"/>
    </source>
</evidence>
<evidence type="ECO:0000250" key="2">
    <source>
        <dbReference type="UniProtKB" id="P84736"/>
    </source>
</evidence>
<evidence type="ECO:0000269" key="3">
    <source ref="1"/>
</evidence>
<evidence type="ECO:0000303" key="4">
    <source ref="1"/>
</evidence>
<evidence type="ECO:0000305" key="5"/>
<evidence type="ECO:0000305" key="6">
    <source ref="1"/>
</evidence>
<sequence length="32" mass="3728">NRNNRDWWHFADYGCYCGYGGSGTPVDELDRC</sequence>
<accession>C0HLB8</accession>
<protein>
    <recommendedName>
        <fullName evidence="4">Phospholipase A2</fullName>
        <shortName evidence="4">MIPLA2-1</shortName>
        <shortName evidence="2">svPLA2</shortName>
        <ecNumber evidence="2">3.1.1.4</ecNumber>
    </recommendedName>
    <alternativeName>
        <fullName evidence="2">Phosphatidylcholine 2-acylhydrolase</fullName>
    </alternativeName>
</protein>
<feature type="chain" id="PRO_0000445265" description="Phospholipase A2" evidence="3">
    <location>
        <begin position="1" status="less than"/>
        <end position="32" status="greater than"/>
    </location>
</feature>
<feature type="binding site" evidence="1">
    <location>
        <position position="16"/>
    </location>
    <ligand>
        <name>Ca(2+)</name>
        <dbReference type="ChEBI" id="CHEBI:29108"/>
    </ligand>
</feature>
<feature type="binding site" evidence="1">
    <location>
        <position position="18"/>
    </location>
    <ligand>
        <name>Ca(2+)</name>
        <dbReference type="ChEBI" id="CHEBI:29108"/>
    </ligand>
</feature>
<feature type="binding site" evidence="1">
    <location>
        <position position="20"/>
    </location>
    <ligand>
        <name>Ca(2+)</name>
        <dbReference type="ChEBI" id="CHEBI:29108"/>
    </ligand>
</feature>
<feature type="disulfide bond" evidence="1">
    <location>
        <begin position="15"/>
        <end status="unknown"/>
    </location>
</feature>
<feature type="disulfide bond" evidence="1">
    <location>
        <begin position="17"/>
        <end status="unknown"/>
    </location>
</feature>
<feature type="disulfide bond" evidence="1">
    <location>
        <begin position="32"/>
        <end status="unknown"/>
    </location>
</feature>
<feature type="non-terminal residue">
    <location>
        <position position="1"/>
    </location>
</feature>
<feature type="non-terminal residue">
    <location>
        <position position="32"/>
    </location>
</feature>
<organism evidence="4">
    <name type="scientific">Micrurus lemniscatus</name>
    <name type="common">South American coral snake</name>
    <dbReference type="NCBI Taxonomy" id="129464"/>
    <lineage>
        <taxon>Eukaryota</taxon>
        <taxon>Metazoa</taxon>
        <taxon>Chordata</taxon>
        <taxon>Craniata</taxon>
        <taxon>Vertebrata</taxon>
        <taxon>Euteleostomi</taxon>
        <taxon>Lepidosauria</taxon>
        <taxon>Squamata</taxon>
        <taxon>Bifurcata</taxon>
        <taxon>Unidentata</taxon>
        <taxon>Episquamata</taxon>
        <taxon>Toxicofera</taxon>
        <taxon>Serpentes</taxon>
        <taxon>Colubroidea</taxon>
        <taxon>Elapidae</taxon>
        <taxon>Elapinae</taxon>
        <taxon>Micrurus</taxon>
    </lineage>
</organism>